<reference key="1">
    <citation type="submission" date="1999-09" db="EMBL/GenBank/DDBJ databases">
        <authorList>
            <person name="Sheppard P."/>
            <person name="Jelinek L."/>
            <person name="Whitmore T."/>
            <person name="Blumberg H."/>
            <person name="Lehner J."/>
            <person name="O'Hara P."/>
        </authorList>
    </citation>
    <scope>NUCLEOTIDE SEQUENCE [MRNA]</scope>
</reference>
<reference key="2">
    <citation type="submission" date="2003-11" db="EMBL/GenBank/DDBJ databases">
        <title>A novel gene regulating tumor angiogenesis.</title>
        <authorList>
            <person name="Tanaka S."/>
            <person name="Maehara M."/>
        </authorList>
    </citation>
    <scope>NUCLEOTIDE SEQUENCE [MRNA]</scope>
    <scope>VARIANT ILE-153</scope>
</reference>
<reference key="3">
    <citation type="submission" date="2012-12" db="EMBL/GenBank/DDBJ databases">
        <title>Characterization of recombinant human epidermal growth factor like-7 (rhEGFL7) produced by Bombyx mori.</title>
        <authorList>
            <person name="Hong S.M."/>
            <person name="Sung H.S."/>
        </authorList>
    </citation>
    <scope>NUCLEOTIDE SEQUENCE [MRNA]</scope>
    <scope>VARIANT ARG-114</scope>
</reference>
<reference key="4">
    <citation type="journal article" date="2007" name="BMC Genomics">
        <title>The full-ORF clone resource of the German cDNA consortium.</title>
        <authorList>
            <person name="Bechtel S."/>
            <person name="Rosenfelder H."/>
            <person name="Duda A."/>
            <person name="Schmidt C.P."/>
            <person name="Ernst U."/>
            <person name="Wellenreuther R."/>
            <person name="Mehrle A."/>
            <person name="Schuster C."/>
            <person name="Bahr A."/>
            <person name="Bloecker H."/>
            <person name="Heubner D."/>
            <person name="Hoerlein A."/>
            <person name="Michel G."/>
            <person name="Wedler H."/>
            <person name="Koehrer K."/>
            <person name="Ottenwaelder B."/>
            <person name="Poustka A."/>
            <person name="Wiemann S."/>
            <person name="Schupp I."/>
        </authorList>
    </citation>
    <scope>NUCLEOTIDE SEQUENCE [LARGE SCALE MRNA]</scope>
    <source>
        <tissue>Uterus</tissue>
    </source>
</reference>
<reference key="5">
    <citation type="journal article" date="2003" name="Genome Res.">
        <title>The secreted protein discovery initiative (SPDI), a large-scale effort to identify novel human secreted and transmembrane proteins: a bioinformatics assessment.</title>
        <authorList>
            <person name="Clark H.F."/>
            <person name="Gurney A.L."/>
            <person name="Abaya E."/>
            <person name="Baker K."/>
            <person name="Baldwin D.T."/>
            <person name="Brush J."/>
            <person name="Chen J."/>
            <person name="Chow B."/>
            <person name="Chui C."/>
            <person name="Crowley C."/>
            <person name="Currell B."/>
            <person name="Deuel B."/>
            <person name="Dowd P."/>
            <person name="Eaton D."/>
            <person name="Foster J.S."/>
            <person name="Grimaldi C."/>
            <person name="Gu Q."/>
            <person name="Hass P.E."/>
            <person name="Heldens S."/>
            <person name="Huang A."/>
            <person name="Kim H.S."/>
            <person name="Klimowski L."/>
            <person name="Jin Y."/>
            <person name="Johnson S."/>
            <person name="Lee J."/>
            <person name="Lewis L."/>
            <person name="Liao D."/>
            <person name="Mark M.R."/>
            <person name="Robbie E."/>
            <person name="Sanchez C."/>
            <person name="Schoenfeld J."/>
            <person name="Seshagiri S."/>
            <person name="Simmons L."/>
            <person name="Singh J."/>
            <person name="Smith V."/>
            <person name="Stinson J."/>
            <person name="Vagts A."/>
            <person name="Vandlen R.L."/>
            <person name="Watanabe C."/>
            <person name="Wieand D."/>
            <person name="Woods K."/>
            <person name="Xie M.-H."/>
            <person name="Yansura D.G."/>
            <person name="Yi S."/>
            <person name="Yu G."/>
            <person name="Yuan J."/>
            <person name="Zhang M."/>
            <person name="Zhang Z."/>
            <person name="Goddard A.D."/>
            <person name="Wood W.I."/>
            <person name="Godowski P.J."/>
            <person name="Gray A.M."/>
        </authorList>
    </citation>
    <scope>NUCLEOTIDE SEQUENCE [LARGE SCALE MRNA]</scope>
</reference>
<reference key="6">
    <citation type="journal article" date="2004" name="Nat. Genet.">
        <title>Complete sequencing and characterization of 21,243 full-length human cDNAs.</title>
        <authorList>
            <person name="Ota T."/>
            <person name="Suzuki Y."/>
            <person name="Nishikawa T."/>
            <person name="Otsuki T."/>
            <person name="Sugiyama T."/>
            <person name="Irie R."/>
            <person name="Wakamatsu A."/>
            <person name="Hayashi K."/>
            <person name="Sato H."/>
            <person name="Nagai K."/>
            <person name="Kimura K."/>
            <person name="Makita H."/>
            <person name="Sekine M."/>
            <person name="Obayashi M."/>
            <person name="Nishi T."/>
            <person name="Shibahara T."/>
            <person name="Tanaka T."/>
            <person name="Ishii S."/>
            <person name="Yamamoto J."/>
            <person name="Saito K."/>
            <person name="Kawai Y."/>
            <person name="Isono Y."/>
            <person name="Nakamura Y."/>
            <person name="Nagahari K."/>
            <person name="Murakami K."/>
            <person name="Yasuda T."/>
            <person name="Iwayanagi T."/>
            <person name="Wagatsuma M."/>
            <person name="Shiratori A."/>
            <person name="Sudo H."/>
            <person name="Hosoiri T."/>
            <person name="Kaku Y."/>
            <person name="Kodaira H."/>
            <person name="Kondo H."/>
            <person name="Sugawara M."/>
            <person name="Takahashi M."/>
            <person name="Kanda K."/>
            <person name="Yokoi T."/>
            <person name="Furuya T."/>
            <person name="Kikkawa E."/>
            <person name="Omura Y."/>
            <person name="Abe K."/>
            <person name="Kamihara K."/>
            <person name="Katsuta N."/>
            <person name="Sato K."/>
            <person name="Tanikawa M."/>
            <person name="Yamazaki M."/>
            <person name="Ninomiya K."/>
            <person name="Ishibashi T."/>
            <person name="Yamashita H."/>
            <person name="Murakawa K."/>
            <person name="Fujimori K."/>
            <person name="Tanai H."/>
            <person name="Kimata M."/>
            <person name="Watanabe M."/>
            <person name="Hiraoka S."/>
            <person name="Chiba Y."/>
            <person name="Ishida S."/>
            <person name="Ono Y."/>
            <person name="Takiguchi S."/>
            <person name="Watanabe S."/>
            <person name="Yosida M."/>
            <person name="Hotuta T."/>
            <person name="Kusano J."/>
            <person name="Kanehori K."/>
            <person name="Takahashi-Fujii A."/>
            <person name="Hara H."/>
            <person name="Tanase T.-O."/>
            <person name="Nomura Y."/>
            <person name="Togiya S."/>
            <person name="Komai F."/>
            <person name="Hara R."/>
            <person name="Takeuchi K."/>
            <person name="Arita M."/>
            <person name="Imose N."/>
            <person name="Musashino K."/>
            <person name="Yuuki H."/>
            <person name="Oshima A."/>
            <person name="Sasaki N."/>
            <person name="Aotsuka S."/>
            <person name="Yoshikawa Y."/>
            <person name="Matsunawa H."/>
            <person name="Ichihara T."/>
            <person name="Shiohata N."/>
            <person name="Sano S."/>
            <person name="Moriya S."/>
            <person name="Momiyama H."/>
            <person name="Satoh N."/>
            <person name="Takami S."/>
            <person name="Terashima Y."/>
            <person name="Suzuki O."/>
            <person name="Nakagawa S."/>
            <person name="Senoh A."/>
            <person name="Mizoguchi H."/>
            <person name="Goto Y."/>
            <person name="Shimizu F."/>
            <person name="Wakebe H."/>
            <person name="Hishigaki H."/>
            <person name="Watanabe T."/>
            <person name="Sugiyama A."/>
            <person name="Takemoto M."/>
            <person name="Kawakami B."/>
            <person name="Yamazaki M."/>
            <person name="Watanabe K."/>
            <person name="Kumagai A."/>
            <person name="Itakura S."/>
            <person name="Fukuzumi Y."/>
            <person name="Fujimori Y."/>
            <person name="Komiyama M."/>
            <person name="Tashiro H."/>
            <person name="Tanigami A."/>
            <person name="Fujiwara T."/>
            <person name="Ono T."/>
            <person name="Yamada K."/>
            <person name="Fujii Y."/>
            <person name="Ozaki K."/>
            <person name="Hirao M."/>
            <person name="Ohmori Y."/>
            <person name="Kawabata A."/>
            <person name="Hikiji T."/>
            <person name="Kobatake N."/>
            <person name="Inagaki H."/>
            <person name="Ikema Y."/>
            <person name="Okamoto S."/>
            <person name="Okitani R."/>
            <person name="Kawakami T."/>
            <person name="Noguchi S."/>
            <person name="Itoh T."/>
            <person name="Shigeta K."/>
            <person name="Senba T."/>
            <person name="Matsumura K."/>
            <person name="Nakajima Y."/>
            <person name="Mizuno T."/>
            <person name="Morinaga M."/>
            <person name="Sasaki M."/>
            <person name="Togashi T."/>
            <person name="Oyama M."/>
            <person name="Hata H."/>
            <person name="Watanabe M."/>
            <person name="Komatsu T."/>
            <person name="Mizushima-Sugano J."/>
            <person name="Satoh T."/>
            <person name="Shirai Y."/>
            <person name="Takahashi Y."/>
            <person name="Nakagawa K."/>
            <person name="Okumura K."/>
            <person name="Nagase T."/>
            <person name="Nomura N."/>
            <person name="Kikuchi H."/>
            <person name="Masuho Y."/>
            <person name="Yamashita R."/>
            <person name="Nakai K."/>
            <person name="Yada T."/>
            <person name="Nakamura Y."/>
            <person name="Ohara O."/>
            <person name="Isogai T."/>
            <person name="Sugano S."/>
        </authorList>
    </citation>
    <scope>NUCLEOTIDE SEQUENCE [LARGE SCALE MRNA]</scope>
    <scope>VARIANT ILE-153</scope>
    <source>
        <tissue>Kidney</tissue>
    </source>
</reference>
<reference key="7">
    <citation type="journal article" date="2004" name="Nature">
        <title>DNA sequence and analysis of human chromosome 9.</title>
        <authorList>
            <person name="Humphray S.J."/>
            <person name="Oliver K."/>
            <person name="Hunt A.R."/>
            <person name="Plumb R.W."/>
            <person name="Loveland J.E."/>
            <person name="Howe K.L."/>
            <person name="Andrews T.D."/>
            <person name="Searle S."/>
            <person name="Hunt S.E."/>
            <person name="Scott C.E."/>
            <person name="Jones M.C."/>
            <person name="Ainscough R."/>
            <person name="Almeida J.P."/>
            <person name="Ambrose K.D."/>
            <person name="Ashwell R.I.S."/>
            <person name="Babbage A.K."/>
            <person name="Babbage S."/>
            <person name="Bagguley C.L."/>
            <person name="Bailey J."/>
            <person name="Banerjee R."/>
            <person name="Barker D.J."/>
            <person name="Barlow K.F."/>
            <person name="Bates K."/>
            <person name="Beasley H."/>
            <person name="Beasley O."/>
            <person name="Bird C.P."/>
            <person name="Bray-Allen S."/>
            <person name="Brown A.J."/>
            <person name="Brown J.Y."/>
            <person name="Burford D."/>
            <person name="Burrill W."/>
            <person name="Burton J."/>
            <person name="Carder C."/>
            <person name="Carter N.P."/>
            <person name="Chapman J.C."/>
            <person name="Chen Y."/>
            <person name="Clarke G."/>
            <person name="Clark S.Y."/>
            <person name="Clee C.M."/>
            <person name="Clegg S."/>
            <person name="Collier R.E."/>
            <person name="Corby N."/>
            <person name="Crosier M."/>
            <person name="Cummings A.T."/>
            <person name="Davies J."/>
            <person name="Dhami P."/>
            <person name="Dunn M."/>
            <person name="Dutta I."/>
            <person name="Dyer L.W."/>
            <person name="Earthrowl M.E."/>
            <person name="Faulkner L."/>
            <person name="Fleming C.J."/>
            <person name="Frankish A."/>
            <person name="Frankland J.A."/>
            <person name="French L."/>
            <person name="Fricker D.G."/>
            <person name="Garner P."/>
            <person name="Garnett J."/>
            <person name="Ghori J."/>
            <person name="Gilbert J.G.R."/>
            <person name="Glison C."/>
            <person name="Grafham D.V."/>
            <person name="Gribble S."/>
            <person name="Griffiths C."/>
            <person name="Griffiths-Jones S."/>
            <person name="Grocock R."/>
            <person name="Guy J."/>
            <person name="Hall R.E."/>
            <person name="Hammond S."/>
            <person name="Harley J.L."/>
            <person name="Harrison E.S.I."/>
            <person name="Hart E.A."/>
            <person name="Heath P.D."/>
            <person name="Henderson C.D."/>
            <person name="Hopkins B.L."/>
            <person name="Howard P.J."/>
            <person name="Howden P.J."/>
            <person name="Huckle E."/>
            <person name="Johnson C."/>
            <person name="Johnson D."/>
            <person name="Joy A.A."/>
            <person name="Kay M."/>
            <person name="Keenan S."/>
            <person name="Kershaw J.K."/>
            <person name="Kimberley A.M."/>
            <person name="King A."/>
            <person name="Knights A."/>
            <person name="Laird G.K."/>
            <person name="Langford C."/>
            <person name="Lawlor S."/>
            <person name="Leongamornlert D.A."/>
            <person name="Leversha M."/>
            <person name="Lloyd C."/>
            <person name="Lloyd D.M."/>
            <person name="Lovell J."/>
            <person name="Martin S."/>
            <person name="Mashreghi-Mohammadi M."/>
            <person name="Matthews L."/>
            <person name="McLaren S."/>
            <person name="McLay K.E."/>
            <person name="McMurray A."/>
            <person name="Milne S."/>
            <person name="Nickerson T."/>
            <person name="Nisbett J."/>
            <person name="Nordsiek G."/>
            <person name="Pearce A.V."/>
            <person name="Peck A.I."/>
            <person name="Porter K.M."/>
            <person name="Pandian R."/>
            <person name="Pelan S."/>
            <person name="Phillimore B."/>
            <person name="Povey S."/>
            <person name="Ramsey Y."/>
            <person name="Rand V."/>
            <person name="Scharfe M."/>
            <person name="Sehra H.K."/>
            <person name="Shownkeen R."/>
            <person name="Sims S.K."/>
            <person name="Skuce C.D."/>
            <person name="Smith M."/>
            <person name="Steward C.A."/>
            <person name="Swarbreck D."/>
            <person name="Sycamore N."/>
            <person name="Tester J."/>
            <person name="Thorpe A."/>
            <person name="Tracey A."/>
            <person name="Tromans A."/>
            <person name="Thomas D.W."/>
            <person name="Wall M."/>
            <person name="Wallis J.M."/>
            <person name="West A.P."/>
            <person name="Whitehead S.L."/>
            <person name="Willey D.L."/>
            <person name="Williams S.A."/>
            <person name="Wilming L."/>
            <person name="Wray P.W."/>
            <person name="Young L."/>
            <person name="Ashurst J.L."/>
            <person name="Coulson A."/>
            <person name="Blocker H."/>
            <person name="Durbin R.M."/>
            <person name="Sulston J.E."/>
            <person name="Hubbard T."/>
            <person name="Jackson M.J."/>
            <person name="Bentley D.R."/>
            <person name="Beck S."/>
            <person name="Rogers J."/>
            <person name="Dunham I."/>
        </authorList>
    </citation>
    <scope>NUCLEOTIDE SEQUENCE [LARGE SCALE GENOMIC DNA]</scope>
</reference>
<reference key="8">
    <citation type="journal article" date="2004" name="Genome Res.">
        <title>The status, quality, and expansion of the NIH full-length cDNA project: the Mammalian Gene Collection (MGC).</title>
        <authorList>
            <consortium name="The MGC Project Team"/>
        </authorList>
    </citation>
    <scope>NUCLEOTIDE SEQUENCE [LARGE SCALE MRNA]</scope>
    <scope>VARIANT ILE-153</scope>
    <source>
        <tissue>Brain</tissue>
        <tissue>Ovary</tissue>
    </source>
</reference>
<reference key="9">
    <citation type="journal article" date="2013" name="Blood">
        <title>EGFL7 ligates alphavbeta3 integrin to enhance vessel formation.</title>
        <authorList>
            <person name="Nikolic I."/>
            <person name="Stankovic N.D."/>
            <person name="Bicker F."/>
            <person name="Meister J."/>
            <person name="Braun H."/>
            <person name="Awwad K."/>
            <person name="Baumgart J."/>
            <person name="Simon K."/>
            <person name="Thal S.C."/>
            <person name="Patra C."/>
            <person name="Harter P.N."/>
            <person name="Plate K.H."/>
            <person name="Engel F.B."/>
            <person name="Dimmeler S."/>
            <person name="Eble J.A."/>
            <person name="Mittelbronn M."/>
            <person name="Schafer M.K."/>
            <person name="Jungblut B."/>
            <person name="Chavakis E."/>
            <person name="Fleming I."/>
            <person name="Schmidt M.H."/>
        </authorList>
    </citation>
    <scope>FUNCTION</scope>
    <scope>SUBCELLULAR LOCATION</scope>
    <scope>SUBUNIT</scope>
    <scope>CELL ATTACHMENT MOTIF</scope>
    <scope>MUTAGENESIS OF GLY-131</scope>
</reference>
<reference key="10">
    <citation type="journal article" date="2013" name="Dev. Cell">
        <title>CASZ1 promotes vascular assembly and morphogenesis through the direct regulation of an EGFL7/RhoA-mediated pathway.</title>
        <authorList>
            <person name="Charpentier M.S."/>
            <person name="Christine K.S."/>
            <person name="Amin N.M."/>
            <person name="Dorr K.M."/>
            <person name="Kushner E.J."/>
            <person name="Bautch V.L."/>
            <person name="Taylor J.M."/>
            <person name="Conlon F.L."/>
        </authorList>
    </citation>
    <scope>FUNCTION</scope>
    <scope>MISCELLANEOUS</scope>
</reference>
<comment type="function">
    <text evidence="7 8">Regulates vascular tubulogenesis in vivo. Inhibits platelet-derived growth factor (PDGF)-BB-induced smooth muscle cell migration and promotes endothelial cell adhesion to the extracellular matrix and angiogenesis.</text>
</comment>
<comment type="subunit">
    <text evidence="7">Interacts with ITGAV/ITGB3 in an RGD-dependent manner, increasing endothelial cell's motility.</text>
</comment>
<comment type="interaction">
    <interactant intactId="EBI-949532">
        <id>Q9UHF1</id>
    </interactant>
    <interactant intactId="EBI-11975289">
        <id>Q9Y223-2</id>
        <label>GNE</label>
    </interactant>
    <organismsDiffer>false</organismsDiffer>
    <experiments>3</experiments>
</comment>
<comment type="interaction">
    <interactant intactId="EBI-949532">
        <id>Q9UHF1</id>
    </interactant>
    <interactant intactId="EBI-5460660">
        <id>Q96MH2</id>
        <label>HEXIM2</label>
    </interactant>
    <organismsDiffer>false</organismsDiffer>
    <experiments>3</experiments>
</comment>
<comment type="interaction">
    <interactant intactId="EBI-949532">
        <id>Q9UHF1</id>
    </interactant>
    <interactant intactId="EBI-740220">
        <id>O14964</id>
        <label>HGS</label>
    </interactant>
    <organismsDiffer>false</organismsDiffer>
    <experiments>3</experiments>
</comment>
<comment type="interaction">
    <interactant intactId="EBI-949532">
        <id>Q9UHF1</id>
    </interactant>
    <interactant intactId="EBI-740785">
        <id>P49639</id>
        <label>HOXA1</label>
    </interactant>
    <organismsDiffer>false</organismsDiffer>
    <experiments>4</experiments>
</comment>
<comment type="interaction">
    <interactant intactId="EBI-949532">
        <id>Q9UHF1</id>
    </interactant>
    <interactant intactId="EBI-3918847">
        <id>Q9H2F3</id>
        <label>HSD3B7</label>
    </interactant>
    <organismsDiffer>false</organismsDiffer>
    <experiments>3</experiments>
</comment>
<comment type="interaction">
    <interactant intactId="EBI-949532">
        <id>Q9UHF1</id>
    </interactant>
    <interactant intactId="EBI-10172526">
        <id>Q9UJV3-2</id>
        <label>MID2</label>
    </interactant>
    <organismsDiffer>false</organismsDiffer>
    <experiments>3</experiments>
</comment>
<comment type="interaction">
    <interactant intactId="EBI-949532">
        <id>Q9UHF1</id>
    </interactant>
    <interactant intactId="EBI-6912267">
        <id>A6NK89</id>
        <label>RASSF10</label>
    </interactant>
    <organismsDiffer>false</organismsDiffer>
    <experiments>3</experiments>
</comment>
<comment type="interaction">
    <interactant intactId="EBI-949532">
        <id>Q9UHF1</id>
    </interactant>
    <interactant intactId="EBI-11959123">
        <id>Q99932-2</id>
        <label>SPAG8</label>
    </interactant>
    <organismsDiffer>false</organismsDiffer>
    <experiments>3</experiments>
</comment>
<comment type="subcellular location">
    <subcellularLocation>
        <location evidence="7">Secreted</location>
        <location evidence="7">Extracellular space</location>
    </subcellularLocation>
</comment>
<comment type="miscellaneous">
    <text>Endothelial cells depleted in EGFL7 by siRNAs display dramatic alterations in adhesion, morphology, and sprouting. The defects are in part due to diminished RhoA expression and impaired focal adhesion localization.</text>
</comment>
<keyword id="KW-0037">Angiogenesis</keyword>
<keyword id="KW-0106">Calcium</keyword>
<keyword id="KW-0130">Cell adhesion</keyword>
<keyword id="KW-0175">Coiled coil</keyword>
<keyword id="KW-0217">Developmental protein</keyword>
<keyword id="KW-0221">Differentiation</keyword>
<keyword id="KW-1015">Disulfide bond</keyword>
<keyword id="KW-0245">EGF-like domain</keyword>
<keyword id="KW-1267">Proteomics identification</keyword>
<keyword id="KW-1185">Reference proteome</keyword>
<keyword id="KW-0677">Repeat</keyword>
<keyword id="KW-0964">Secreted</keyword>
<keyword id="KW-0732">Signal</keyword>
<dbReference type="EMBL" id="AF186111">
    <property type="protein sequence ID" value="AAF01429.1"/>
    <property type="molecule type" value="mRNA"/>
</dbReference>
<dbReference type="EMBL" id="AB125649">
    <property type="protein sequence ID" value="BAD01469.1"/>
    <property type="molecule type" value="mRNA"/>
</dbReference>
<dbReference type="EMBL" id="KC485578">
    <property type="protein sequence ID" value="AGJ83826.1"/>
    <property type="molecule type" value="mRNA"/>
</dbReference>
<dbReference type="EMBL" id="AL512735">
    <property type="protein sequence ID" value="CAC21666.1"/>
    <property type="molecule type" value="mRNA"/>
</dbReference>
<dbReference type="EMBL" id="AY358901">
    <property type="protein sequence ID" value="AAQ89260.1"/>
    <property type="molecule type" value="mRNA"/>
</dbReference>
<dbReference type="EMBL" id="AY358902">
    <property type="protein sequence ID" value="AAQ89261.1"/>
    <property type="molecule type" value="mRNA"/>
</dbReference>
<dbReference type="EMBL" id="AY358903">
    <property type="protein sequence ID" value="AAQ89262.1"/>
    <property type="molecule type" value="mRNA"/>
</dbReference>
<dbReference type="EMBL" id="AK091964">
    <property type="protein sequence ID" value="BAG52452.1"/>
    <property type="molecule type" value="mRNA"/>
</dbReference>
<dbReference type="EMBL" id="AL590226">
    <property type="status" value="NOT_ANNOTATED_CDS"/>
    <property type="molecule type" value="Genomic_DNA"/>
</dbReference>
<dbReference type="EMBL" id="BC012377">
    <property type="protein sequence ID" value="AAH12377.1"/>
    <property type="molecule type" value="mRNA"/>
</dbReference>
<dbReference type="EMBL" id="BC088371">
    <property type="protein sequence ID" value="AAH88371.1"/>
    <property type="molecule type" value="mRNA"/>
</dbReference>
<dbReference type="CCDS" id="CCDS7002.1"/>
<dbReference type="RefSeq" id="NP_057299.1">
    <property type="nucleotide sequence ID" value="NM_016215.5"/>
</dbReference>
<dbReference type="RefSeq" id="NP_958854.1">
    <property type="nucleotide sequence ID" value="NM_201446.3"/>
</dbReference>
<dbReference type="RefSeq" id="XP_011517066.1">
    <property type="nucleotide sequence ID" value="XM_011518764.1"/>
</dbReference>
<dbReference type="RefSeq" id="XP_011517067.1">
    <property type="nucleotide sequence ID" value="XM_011518765.1"/>
</dbReference>
<dbReference type="RefSeq" id="XP_011517068.1">
    <property type="nucleotide sequence ID" value="XM_011518766.1"/>
</dbReference>
<dbReference type="RefSeq" id="XP_047279407.1">
    <property type="nucleotide sequence ID" value="XM_047423451.1"/>
</dbReference>
<dbReference type="RefSeq" id="XP_054219040.1">
    <property type="nucleotide sequence ID" value="XM_054363065.1"/>
</dbReference>
<dbReference type="BioGRID" id="119343">
    <property type="interactions" value="92"/>
</dbReference>
<dbReference type="FunCoup" id="Q9UHF1">
    <property type="interactions" value="45"/>
</dbReference>
<dbReference type="IntAct" id="Q9UHF1">
    <property type="interactions" value="71"/>
</dbReference>
<dbReference type="MINT" id="Q9UHF1"/>
<dbReference type="STRING" id="9606.ENSP00000360764"/>
<dbReference type="ChEMBL" id="CHEMBL3712972"/>
<dbReference type="GlyGen" id="Q9UHF1">
    <property type="glycosylation" value="5 sites, 1 O-linked glycan (4 sites)"/>
</dbReference>
<dbReference type="iPTMnet" id="Q9UHF1"/>
<dbReference type="PhosphoSitePlus" id="Q9UHF1"/>
<dbReference type="BioMuta" id="EGFL7"/>
<dbReference type="DMDM" id="92090985"/>
<dbReference type="jPOST" id="Q9UHF1"/>
<dbReference type="MassIVE" id="Q9UHF1"/>
<dbReference type="PaxDb" id="9606-ENSP00000360764"/>
<dbReference type="PeptideAtlas" id="Q9UHF1"/>
<dbReference type="ProteomicsDB" id="84339"/>
<dbReference type="ABCD" id="Q9UHF1">
    <property type="antibodies" value="1 sequenced antibody"/>
</dbReference>
<dbReference type="Antibodypedia" id="32209">
    <property type="antibodies" value="366 antibodies from 37 providers"/>
</dbReference>
<dbReference type="DNASU" id="51162"/>
<dbReference type="Ensembl" id="ENST00000308874.12">
    <property type="protein sequence ID" value="ENSP00000307843.7"/>
    <property type="gene ID" value="ENSG00000172889.16"/>
</dbReference>
<dbReference type="Ensembl" id="ENST00000371698.3">
    <property type="protein sequence ID" value="ENSP00000360763.3"/>
    <property type="gene ID" value="ENSG00000172889.16"/>
</dbReference>
<dbReference type="Ensembl" id="ENST00000371699.5">
    <property type="protein sequence ID" value="ENSP00000360764.1"/>
    <property type="gene ID" value="ENSG00000172889.16"/>
</dbReference>
<dbReference type="Ensembl" id="ENST00000406555.7">
    <property type="protein sequence ID" value="ENSP00000385639.3"/>
    <property type="gene ID" value="ENSG00000172889.16"/>
</dbReference>
<dbReference type="GeneID" id="51162"/>
<dbReference type="KEGG" id="hsa:51162"/>
<dbReference type="MANE-Select" id="ENST00000308874.12">
    <property type="protein sequence ID" value="ENSP00000307843.7"/>
    <property type="RefSeq nucleotide sequence ID" value="NM_016215.5"/>
    <property type="RefSeq protein sequence ID" value="NP_057299.1"/>
</dbReference>
<dbReference type="UCSC" id="uc004cid.3">
    <property type="organism name" value="human"/>
</dbReference>
<dbReference type="AGR" id="HGNC:20594"/>
<dbReference type="CTD" id="51162"/>
<dbReference type="DisGeNET" id="51162"/>
<dbReference type="GeneCards" id="EGFL7"/>
<dbReference type="HGNC" id="HGNC:20594">
    <property type="gene designation" value="EGFL7"/>
</dbReference>
<dbReference type="HPA" id="ENSG00000172889">
    <property type="expression patterns" value="Low tissue specificity"/>
</dbReference>
<dbReference type="MalaCards" id="EGFL7"/>
<dbReference type="MIM" id="608582">
    <property type="type" value="gene"/>
</dbReference>
<dbReference type="neXtProt" id="NX_Q9UHF1"/>
<dbReference type="OpenTargets" id="ENSG00000172889"/>
<dbReference type="PharmGKB" id="PA134928613"/>
<dbReference type="VEuPathDB" id="HostDB:ENSG00000172889"/>
<dbReference type="eggNOG" id="KOG1217">
    <property type="taxonomic scope" value="Eukaryota"/>
</dbReference>
<dbReference type="GeneTree" id="ENSGT00940000160015"/>
<dbReference type="HOGENOM" id="CLU_083642_0_0_1"/>
<dbReference type="InParanoid" id="Q9UHF1"/>
<dbReference type="OMA" id="PGWRRVH"/>
<dbReference type="OrthoDB" id="155976at2759"/>
<dbReference type="PAN-GO" id="Q9UHF1">
    <property type="GO annotations" value="4 GO annotations based on evolutionary models"/>
</dbReference>
<dbReference type="PhylomeDB" id="Q9UHF1"/>
<dbReference type="TreeFam" id="TF331360"/>
<dbReference type="PathwayCommons" id="Q9UHF1"/>
<dbReference type="SignaLink" id="Q9UHF1"/>
<dbReference type="SIGNOR" id="Q9UHF1"/>
<dbReference type="BioGRID-ORCS" id="51162">
    <property type="hits" value="29 hits in 1158 CRISPR screens"/>
</dbReference>
<dbReference type="ChiTaRS" id="EGFL7">
    <property type="organism name" value="human"/>
</dbReference>
<dbReference type="GeneWiki" id="EGFL7"/>
<dbReference type="GenomeRNAi" id="51162"/>
<dbReference type="Pharos" id="Q9UHF1">
    <property type="development level" value="Tbio"/>
</dbReference>
<dbReference type="PRO" id="PR:Q9UHF1"/>
<dbReference type="Proteomes" id="UP000005640">
    <property type="component" value="Chromosome 9"/>
</dbReference>
<dbReference type="RNAct" id="Q9UHF1">
    <property type="molecule type" value="protein"/>
</dbReference>
<dbReference type="Bgee" id="ENSG00000172889">
    <property type="expression patterns" value="Expressed in right lung and 175 other cell types or tissues"/>
</dbReference>
<dbReference type="ExpressionAtlas" id="Q9UHF1">
    <property type="expression patterns" value="baseline and differential"/>
</dbReference>
<dbReference type="GO" id="GO:0009986">
    <property type="term" value="C:cell surface"/>
    <property type="evidence" value="ECO:0000318"/>
    <property type="project" value="GO_Central"/>
</dbReference>
<dbReference type="GO" id="GO:0062023">
    <property type="term" value="C:collagen-containing extracellular matrix"/>
    <property type="evidence" value="ECO:0007005"/>
    <property type="project" value="UniProtKB"/>
</dbReference>
<dbReference type="GO" id="GO:0005576">
    <property type="term" value="C:extracellular region"/>
    <property type="evidence" value="ECO:0000250"/>
    <property type="project" value="UniProtKB"/>
</dbReference>
<dbReference type="GO" id="GO:0005509">
    <property type="term" value="F:calcium ion binding"/>
    <property type="evidence" value="ECO:0007669"/>
    <property type="project" value="InterPro"/>
</dbReference>
<dbReference type="GO" id="GO:0005102">
    <property type="term" value="F:signaling receptor binding"/>
    <property type="evidence" value="ECO:0000318"/>
    <property type="project" value="GO_Central"/>
</dbReference>
<dbReference type="GO" id="GO:0001525">
    <property type="term" value="P:angiogenesis"/>
    <property type="evidence" value="ECO:0007669"/>
    <property type="project" value="UniProtKB-KW"/>
</dbReference>
<dbReference type="GO" id="GO:0001568">
    <property type="term" value="P:blood vessel development"/>
    <property type="evidence" value="ECO:0000250"/>
    <property type="project" value="UniProtKB"/>
</dbReference>
<dbReference type="GO" id="GO:0007155">
    <property type="term" value="P:cell adhesion"/>
    <property type="evidence" value="ECO:0007669"/>
    <property type="project" value="UniProtKB-KW"/>
</dbReference>
<dbReference type="GO" id="GO:0045746">
    <property type="term" value="P:negative regulation of Notch signaling pathway"/>
    <property type="evidence" value="ECO:0000315"/>
    <property type="project" value="MGI"/>
</dbReference>
<dbReference type="GO" id="GO:0001938">
    <property type="term" value="P:positive regulation of endothelial cell proliferation"/>
    <property type="evidence" value="ECO:0000315"/>
    <property type="project" value="MGI"/>
</dbReference>
<dbReference type="GO" id="GO:0001570">
    <property type="term" value="P:vasculogenesis"/>
    <property type="evidence" value="ECO:0000250"/>
    <property type="project" value="UniProtKB"/>
</dbReference>
<dbReference type="CDD" id="cd00054">
    <property type="entry name" value="EGF_CA"/>
    <property type="match status" value="1"/>
</dbReference>
<dbReference type="FunFam" id="2.10.25.10:FF:000485">
    <property type="entry name" value="Epidermal growth factor-like protein 7"/>
    <property type="match status" value="1"/>
</dbReference>
<dbReference type="FunFam" id="2.10.25.10:FF:000010">
    <property type="entry name" value="Pro-epidermal growth factor"/>
    <property type="match status" value="1"/>
</dbReference>
<dbReference type="Gene3D" id="2.10.25.10">
    <property type="entry name" value="Laminin"/>
    <property type="match status" value="2"/>
</dbReference>
<dbReference type="InterPro" id="IPR050969">
    <property type="entry name" value="Dev_Signal_Modulators"/>
</dbReference>
<dbReference type="InterPro" id="IPR001881">
    <property type="entry name" value="EGF-like_Ca-bd_dom"/>
</dbReference>
<dbReference type="InterPro" id="IPR000742">
    <property type="entry name" value="EGF-like_dom"/>
</dbReference>
<dbReference type="InterPro" id="IPR018097">
    <property type="entry name" value="EGF_Ca-bd_CS"/>
</dbReference>
<dbReference type="InterPro" id="IPR013111">
    <property type="entry name" value="EGF_extracell"/>
</dbReference>
<dbReference type="InterPro" id="IPR011489">
    <property type="entry name" value="EMI_domain"/>
</dbReference>
<dbReference type="InterPro" id="IPR009030">
    <property type="entry name" value="Growth_fac_rcpt_cys_sf"/>
</dbReference>
<dbReference type="PANTHER" id="PTHR14949">
    <property type="entry name" value="EGF-LIKE-DOMAIN, MULTIPLE 7, 8"/>
    <property type="match status" value="1"/>
</dbReference>
<dbReference type="PANTHER" id="PTHR14949:SF21">
    <property type="entry name" value="EPIDERMAL GROWTH FACTOR-LIKE PROTEIN 7"/>
    <property type="match status" value="1"/>
</dbReference>
<dbReference type="Pfam" id="PF07974">
    <property type="entry name" value="EGF_2"/>
    <property type="match status" value="1"/>
</dbReference>
<dbReference type="Pfam" id="PF07546">
    <property type="entry name" value="EMI"/>
    <property type="match status" value="1"/>
</dbReference>
<dbReference type="Pfam" id="PF14670">
    <property type="entry name" value="FXa_inhibition"/>
    <property type="match status" value="1"/>
</dbReference>
<dbReference type="SMART" id="SM00181">
    <property type="entry name" value="EGF"/>
    <property type="match status" value="2"/>
</dbReference>
<dbReference type="SMART" id="SM00179">
    <property type="entry name" value="EGF_CA"/>
    <property type="match status" value="1"/>
</dbReference>
<dbReference type="SUPFAM" id="SSF57196">
    <property type="entry name" value="EGF/Laminin"/>
    <property type="match status" value="1"/>
</dbReference>
<dbReference type="SUPFAM" id="SSF57184">
    <property type="entry name" value="Growth factor receptor domain"/>
    <property type="match status" value="1"/>
</dbReference>
<dbReference type="PROSITE" id="PS00010">
    <property type="entry name" value="ASX_HYDROXYL"/>
    <property type="match status" value="1"/>
</dbReference>
<dbReference type="PROSITE" id="PS00022">
    <property type="entry name" value="EGF_1"/>
    <property type="match status" value="1"/>
</dbReference>
<dbReference type="PROSITE" id="PS01186">
    <property type="entry name" value="EGF_2"/>
    <property type="match status" value="1"/>
</dbReference>
<dbReference type="PROSITE" id="PS50026">
    <property type="entry name" value="EGF_3"/>
    <property type="match status" value="1"/>
</dbReference>
<dbReference type="PROSITE" id="PS01187">
    <property type="entry name" value="EGF_CA"/>
    <property type="match status" value="1"/>
</dbReference>
<dbReference type="PROSITE" id="PS51041">
    <property type="entry name" value="EMI"/>
    <property type="match status" value="1"/>
</dbReference>
<evidence type="ECO:0000250" key="1"/>
<evidence type="ECO:0000255" key="2"/>
<evidence type="ECO:0000255" key="3">
    <source>
        <dbReference type="PROSITE-ProRule" id="PRU00076"/>
    </source>
</evidence>
<evidence type="ECO:0000255" key="4">
    <source>
        <dbReference type="PROSITE-ProRule" id="PRU00384"/>
    </source>
</evidence>
<evidence type="ECO:0000269" key="5">
    <source>
    </source>
</evidence>
<evidence type="ECO:0000269" key="6">
    <source>
    </source>
</evidence>
<evidence type="ECO:0000269" key="7">
    <source>
    </source>
</evidence>
<evidence type="ECO:0000269" key="8">
    <source>
    </source>
</evidence>
<evidence type="ECO:0000269" key="9">
    <source ref="2"/>
</evidence>
<evidence type="ECO:0000269" key="10">
    <source ref="3"/>
</evidence>
<accession>Q9UHF1</accession>
<accession>B3KRP0</accession>
<accession>M9VTX9</accession>
<accession>Q5M7Y5</accession>
<accession>Q5VUD5</accession>
<accession>Q96EG0</accession>
<gene>
    <name type="primary">EGFL7</name>
    <name type="synonym">MEGF7</name>
    <name type="ORF">UNQ187/PRO1449</name>
</gene>
<organism>
    <name type="scientific">Homo sapiens</name>
    <name type="common">Human</name>
    <dbReference type="NCBI Taxonomy" id="9606"/>
    <lineage>
        <taxon>Eukaryota</taxon>
        <taxon>Metazoa</taxon>
        <taxon>Chordata</taxon>
        <taxon>Craniata</taxon>
        <taxon>Vertebrata</taxon>
        <taxon>Euteleostomi</taxon>
        <taxon>Mammalia</taxon>
        <taxon>Eutheria</taxon>
        <taxon>Euarchontoglires</taxon>
        <taxon>Primates</taxon>
        <taxon>Haplorrhini</taxon>
        <taxon>Catarrhini</taxon>
        <taxon>Hominidae</taxon>
        <taxon>Homo</taxon>
    </lineage>
</organism>
<protein>
    <recommendedName>
        <fullName>Epidermal growth factor-like protein 7</fullName>
        <shortName>EGF-like protein 7</shortName>
    </recommendedName>
    <alternativeName>
        <fullName>Multiple epidermal growth factor-like domains protein 7</fullName>
        <shortName>Multiple EGF-like domains protein 7</shortName>
    </alternativeName>
    <alternativeName>
        <fullName>NOTCH4-like protein</fullName>
    </alternativeName>
    <alternativeName>
        <fullName>Vascular endothelial statin</fullName>
        <shortName>VE-statin</shortName>
    </alternativeName>
    <alternativeName>
        <fullName>Zneu1</fullName>
    </alternativeName>
</protein>
<proteinExistence type="evidence at protein level"/>
<name>EGFL7_HUMAN</name>
<sequence length="273" mass="29618">MRGSQEVLLMWLLVLAVGGTEHAYRPGRRVCAVRAHGDPVSESFVQRVYQPFLTTCDGHRACSTYRTIYRTAYRRSPGLAPARPRYACCPGWKRTSGLPGACGAAICQPPCRNGGSCVQPGRCRCPAGWRGDTCQSDVDECSARRGGCPQRCVNTAGSYWCQCWEGHSLSADGTLCVPKGGPPRVAPNPTGVDSAMKEEVQRLQSRVDLLEEKLQLVLAPLHSLASQALEHGLPDPGSLLVHSFQQLGRIDSLSEQISFLEEQLGSCSCKKDS</sequence>
<feature type="signal peptide" evidence="2">
    <location>
        <begin position="1"/>
        <end position="23"/>
    </location>
</feature>
<feature type="chain" id="PRO_0000007528" description="Epidermal growth factor-like protein 7">
    <location>
        <begin position="24"/>
        <end position="273"/>
    </location>
</feature>
<feature type="domain" description="EMI" evidence="4">
    <location>
        <begin position="27"/>
        <end position="104"/>
    </location>
</feature>
<feature type="domain" description="EGF-like 1" evidence="3">
    <location>
        <begin position="103"/>
        <end position="135"/>
    </location>
</feature>
<feature type="domain" description="EGF-like 2; calcium-binding" evidence="3">
    <location>
        <begin position="137"/>
        <end position="177"/>
    </location>
</feature>
<feature type="coiled-coil region" evidence="2">
    <location>
        <begin position="192"/>
        <end position="219"/>
    </location>
</feature>
<feature type="short sequence motif" description="Cell attachment site">
    <location>
        <begin position="130"/>
        <end position="132"/>
    </location>
</feature>
<feature type="disulfide bond" evidence="1">
    <location>
        <begin position="31"/>
        <end position="89"/>
    </location>
</feature>
<feature type="disulfide bond" evidence="1">
    <location>
        <begin position="56"/>
        <end position="62"/>
    </location>
</feature>
<feature type="disulfide bond" evidence="1">
    <location>
        <begin position="88"/>
        <end position="102"/>
    </location>
</feature>
<feature type="disulfide bond" evidence="1">
    <location>
        <begin position="107"/>
        <end position="117"/>
    </location>
</feature>
<feature type="disulfide bond" evidence="1">
    <location>
        <begin position="111"/>
        <end position="123"/>
    </location>
</feature>
<feature type="disulfide bond" evidence="1">
    <location>
        <begin position="125"/>
        <end position="134"/>
    </location>
</feature>
<feature type="disulfide bond" evidence="1">
    <location>
        <begin position="141"/>
        <end position="152"/>
    </location>
</feature>
<feature type="disulfide bond" evidence="1">
    <location>
        <begin position="148"/>
        <end position="161"/>
    </location>
</feature>
<feature type="disulfide bond" evidence="1">
    <location>
        <begin position="163"/>
        <end position="176"/>
    </location>
</feature>
<feature type="sequence variant" id="VAR_070951" description="In dbSNP:rs61736886." evidence="10">
    <original>G</original>
    <variation>R</variation>
    <location>
        <position position="114"/>
    </location>
</feature>
<feature type="sequence variant" id="VAR_019791" description="In dbSNP:rs2297538." evidence="5 6 9">
    <original>V</original>
    <variation>I</variation>
    <location>
        <position position="153"/>
    </location>
</feature>
<feature type="sequence variant" id="VAR_048981" description="In dbSNP:rs35863900.">
    <original>P</original>
    <variation>S</variation>
    <location>
        <position position="183"/>
    </location>
</feature>
<feature type="sequence variant" id="VAR_048982" description="In dbSNP:rs34142075.">
    <original>A</original>
    <variation>G</variation>
    <location>
        <position position="186"/>
    </location>
</feature>
<feature type="mutagenesis site" description="Disrupts RGD motif and results in a 79% loss of cell adhesion." evidence="7">
    <original>G</original>
    <variation>A</variation>
    <location>
        <position position="131"/>
    </location>
</feature>